<dbReference type="EMBL" id="AP009240">
    <property type="protein sequence ID" value="BAG79013.1"/>
    <property type="molecule type" value="Genomic_DNA"/>
</dbReference>
<dbReference type="RefSeq" id="WP_000243741.1">
    <property type="nucleotide sequence ID" value="NC_011415.1"/>
</dbReference>
<dbReference type="SMR" id="B6I1S8"/>
<dbReference type="GeneID" id="93778776"/>
<dbReference type="KEGG" id="ecy:ECSE_3489"/>
<dbReference type="HOGENOM" id="CLU_059558_1_1_6"/>
<dbReference type="Proteomes" id="UP000008199">
    <property type="component" value="Chromosome"/>
</dbReference>
<dbReference type="GO" id="GO:0005524">
    <property type="term" value="F:ATP binding"/>
    <property type="evidence" value="ECO:0007669"/>
    <property type="project" value="UniProtKB-UniRule"/>
</dbReference>
<dbReference type="GO" id="GO:0005525">
    <property type="term" value="F:GTP binding"/>
    <property type="evidence" value="ECO:0007669"/>
    <property type="project" value="UniProtKB-UniRule"/>
</dbReference>
<dbReference type="GO" id="GO:0003723">
    <property type="term" value="F:RNA binding"/>
    <property type="evidence" value="ECO:0007669"/>
    <property type="project" value="UniProtKB-KW"/>
</dbReference>
<dbReference type="Gene3D" id="3.40.50.300">
    <property type="entry name" value="P-loop containing nucleotide triphosphate hydrolases"/>
    <property type="match status" value="1"/>
</dbReference>
<dbReference type="HAMAP" id="MF_00636">
    <property type="entry name" value="RapZ_like"/>
    <property type="match status" value="1"/>
</dbReference>
<dbReference type="InterPro" id="IPR027417">
    <property type="entry name" value="P-loop_NTPase"/>
</dbReference>
<dbReference type="InterPro" id="IPR005337">
    <property type="entry name" value="RapZ-like"/>
</dbReference>
<dbReference type="InterPro" id="IPR053930">
    <property type="entry name" value="RapZ-like_N"/>
</dbReference>
<dbReference type="InterPro" id="IPR053931">
    <property type="entry name" value="RapZ_C"/>
</dbReference>
<dbReference type="NCBIfam" id="NF003828">
    <property type="entry name" value="PRK05416.1"/>
    <property type="match status" value="1"/>
</dbReference>
<dbReference type="PANTHER" id="PTHR30448">
    <property type="entry name" value="RNASE ADAPTER PROTEIN RAPZ"/>
    <property type="match status" value="1"/>
</dbReference>
<dbReference type="PANTHER" id="PTHR30448:SF0">
    <property type="entry name" value="RNASE ADAPTER PROTEIN RAPZ"/>
    <property type="match status" value="1"/>
</dbReference>
<dbReference type="Pfam" id="PF22740">
    <property type="entry name" value="PapZ_C"/>
    <property type="match status" value="1"/>
</dbReference>
<dbReference type="Pfam" id="PF03668">
    <property type="entry name" value="RapZ-like_N"/>
    <property type="match status" value="1"/>
</dbReference>
<dbReference type="PIRSF" id="PIRSF005052">
    <property type="entry name" value="P-loopkin"/>
    <property type="match status" value="1"/>
</dbReference>
<dbReference type="SUPFAM" id="SSF52540">
    <property type="entry name" value="P-loop containing nucleoside triphosphate hydrolases"/>
    <property type="match status" value="1"/>
</dbReference>
<evidence type="ECO:0000255" key="1">
    <source>
        <dbReference type="HAMAP-Rule" id="MF_00636"/>
    </source>
</evidence>
<name>RAPZ_ECOSE</name>
<gene>
    <name evidence="1" type="primary">rapZ</name>
    <name type="ordered locus">ECSE_3489</name>
</gene>
<sequence>MVLMIVSGRSGSGKSVALRALEDMGFYCVDNLPVVLLPDLARTLADREISAAVSIDVRNMPESPEIFEQAMSNLPDAFSPQLLFLDADRNTLIRRYSDTRRLHPLSSKNLSLESAIDKESDLLEPLRSRADLIVDTSEMSVHELAEMLRTRLLGKRERELTMVFESFGFKHGIPIDADYVFDVRFLPNPHWDPKLRPMTGLDKPVAAFLDRHTEVHNFIYQTRSYLELWLPMLETNNRSYLTVAIGCTGGKHRSVYIAEQLADYFRSRGKNVQSRHRTLEKRKP</sequence>
<proteinExistence type="inferred from homology"/>
<accession>B6I1S8</accession>
<protein>
    <recommendedName>
        <fullName evidence="1">RNase adapter protein RapZ</fullName>
    </recommendedName>
</protein>
<reference key="1">
    <citation type="journal article" date="2008" name="DNA Res.">
        <title>Complete genome sequence and comparative analysis of the wild-type commensal Escherichia coli strain SE11 isolated from a healthy adult.</title>
        <authorList>
            <person name="Oshima K."/>
            <person name="Toh H."/>
            <person name="Ogura Y."/>
            <person name="Sasamoto H."/>
            <person name="Morita H."/>
            <person name="Park S.-H."/>
            <person name="Ooka T."/>
            <person name="Iyoda S."/>
            <person name="Taylor T.D."/>
            <person name="Hayashi T."/>
            <person name="Itoh K."/>
            <person name="Hattori M."/>
        </authorList>
    </citation>
    <scope>NUCLEOTIDE SEQUENCE [LARGE SCALE GENOMIC DNA]</scope>
    <source>
        <strain>SE11</strain>
    </source>
</reference>
<keyword id="KW-0067">ATP-binding</keyword>
<keyword id="KW-0342">GTP-binding</keyword>
<keyword id="KW-0547">Nucleotide-binding</keyword>
<keyword id="KW-0694">RNA-binding</keyword>
<comment type="function">
    <text evidence="1">Modulates the synthesis of GlmS, by affecting the processing and stability of the regulatory small RNA GlmZ. When glucosamine-6-phosphate (GlcN6P) concentrations are high in the cell, RapZ binds GlmZ and targets it to cleavage by RNase E. Consequently, GlmZ is inactivated and unable to activate GlmS synthesis. Under low GlcN6P concentrations, RapZ is sequestered and inactivated by an other regulatory small RNA, GlmY, preventing GlmZ degradation and leading to synthesis of GlmS.</text>
</comment>
<comment type="subunit">
    <text evidence="1">Homotrimer.</text>
</comment>
<comment type="similarity">
    <text evidence="1">Belongs to the RapZ-like family. RapZ subfamily.</text>
</comment>
<feature type="chain" id="PRO_1000130754" description="RNase adapter protein RapZ">
    <location>
        <begin position="1"/>
        <end position="284"/>
    </location>
</feature>
<feature type="region of interest" description="RNA-binding" evidence="1">
    <location>
        <begin position="266"/>
        <end position="284"/>
    </location>
</feature>
<feature type="binding site" evidence="1">
    <location>
        <begin position="8"/>
        <end position="15"/>
    </location>
    <ligand>
        <name>ATP</name>
        <dbReference type="ChEBI" id="CHEBI:30616"/>
    </ligand>
</feature>
<feature type="binding site" evidence="1">
    <location>
        <begin position="56"/>
        <end position="59"/>
    </location>
    <ligand>
        <name>GTP</name>
        <dbReference type="ChEBI" id="CHEBI:37565"/>
    </ligand>
</feature>
<organism>
    <name type="scientific">Escherichia coli (strain SE11)</name>
    <dbReference type="NCBI Taxonomy" id="409438"/>
    <lineage>
        <taxon>Bacteria</taxon>
        <taxon>Pseudomonadati</taxon>
        <taxon>Pseudomonadota</taxon>
        <taxon>Gammaproteobacteria</taxon>
        <taxon>Enterobacterales</taxon>
        <taxon>Enterobacteriaceae</taxon>
        <taxon>Escherichia</taxon>
    </lineage>
</organism>